<comment type="function">
    <text>May be involved in transcriptional regulation.</text>
</comment>
<comment type="subcellular location">
    <subcellularLocation>
        <location evidence="2">Nucleus</location>
    </subcellularLocation>
</comment>
<comment type="similarity">
    <text evidence="2">Belongs to the krueppel C2H2-type zinc-finger protein family.</text>
</comment>
<name>ZG7_XENLA</name>
<accession>P18735</accession>
<proteinExistence type="inferred from homology"/>
<protein>
    <recommendedName>
        <fullName>Gastrula zinc finger protein XlCGF7.1</fullName>
    </recommendedName>
</protein>
<organism>
    <name type="scientific">Xenopus laevis</name>
    <name type="common">African clawed frog</name>
    <dbReference type="NCBI Taxonomy" id="8355"/>
    <lineage>
        <taxon>Eukaryota</taxon>
        <taxon>Metazoa</taxon>
        <taxon>Chordata</taxon>
        <taxon>Craniata</taxon>
        <taxon>Vertebrata</taxon>
        <taxon>Euteleostomi</taxon>
        <taxon>Amphibia</taxon>
        <taxon>Batrachia</taxon>
        <taxon>Anura</taxon>
        <taxon>Pipoidea</taxon>
        <taxon>Pipidae</taxon>
        <taxon>Xenopodinae</taxon>
        <taxon>Xenopus</taxon>
        <taxon>Xenopus</taxon>
    </lineage>
</organism>
<evidence type="ECO:0000255" key="1">
    <source>
        <dbReference type="PROSITE-ProRule" id="PRU00042"/>
    </source>
</evidence>
<evidence type="ECO:0000305" key="2"/>
<sequence length="168" mass="19472">TREKPFTCTECGKGFSDKSNLRSHQRTHTREKPFTCTECGKSFSQKIGLHNHLKCHTGEKPFMCTECGKSFSNKSNLHTHRKIHTGERPYICTECGKTFPRKKNLQSHQTVHTQEKPFTCSECGKCFSQKKNLHTHQKIHTGEKPFKCNECGQAFLRKRNLLSHERIH</sequence>
<keyword id="KW-0238">DNA-binding</keyword>
<keyword id="KW-0479">Metal-binding</keyword>
<keyword id="KW-0539">Nucleus</keyword>
<keyword id="KW-1185">Reference proteome</keyword>
<keyword id="KW-0677">Repeat</keyword>
<keyword id="KW-0804">Transcription</keyword>
<keyword id="KW-0805">Transcription regulation</keyword>
<keyword id="KW-0862">Zinc</keyword>
<keyword id="KW-0863">Zinc-finger</keyword>
<feature type="chain" id="PRO_0000047783" description="Gastrula zinc finger protein XlCGF7.1">
    <location>
        <begin position="1" status="less than"/>
        <end position="168" status="greater than"/>
    </location>
</feature>
<feature type="zinc finger region" description="C2H2-type 1" evidence="1">
    <location>
        <begin position="6"/>
        <end position="28"/>
    </location>
</feature>
<feature type="zinc finger region" description="C2H2-type 2" evidence="1">
    <location>
        <begin position="34"/>
        <end position="56"/>
    </location>
</feature>
<feature type="zinc finger region" description="C2H2-type 3" evidence="1">
    <location>
        <begin position="62"/>
        <end position="84"/>
    </location>
</feature>
<feature type="zinc finger region" description="C2H2-type 4" evidence="1">
    <location>
        <begin position="90"/>
        <end position="112"/>
    </location>
</feature>
<feature type="zinc finger region" description="C2H2-type 5" evidence="1">
    <location>
        <begin position="118"/>
        <end position="140"/>
    </location>
</feature>
<feature type="zinc finger region" description="C2H2-type 6" evidence="1">
    <location>
        <begin position="146"/>
        <end position="168"/>
    </location>
</feature>
<feature type="non-terminal residue">
    <location>
        <position position="1"/>
    </location>
</feature>
<feature type="non-terminal residue">
    <location>
        <position position="168"/>
    </location>
</feature>
<dbReference type="PIR" id="S06560">
    <property type="entry name" value="S06560"/>
</dbReference>
<dbReference type="SMR" id="P18735"/>
<dbReference type="Proteomes" id="UP000186698">
    <property type="component" value="Unplaced"/>
</dbReference>
<dbReference type="GO" id="GO:0005634">
    <property type="term" value="C:nucleus"/>
    <property type="evidence" value="ECO:0007669"/>
    <property type="project" value="UniProtKB-SubCell"/>
</dbReference>
<dbReference type="GO" id="GO:0003677">
    <property type="term" value="F:DNA binding"/>
    <property type="evidence" value="ECO:0007669"/>
    <property type="project" value="UniProtKB-KW"/>
</dbReference>
<dbReference type="GO" id="GO:0008270">
    <property type="term" value="F:zinc ion binding"/>
    <property type="evidence" value="ECO:0007669"/>
    <property type="project" value="UniProtKB-KW"/>
</dbReference>
<dbReference type="GO" id="GO:0010468">
    <property type="term" value="P:regulation of gene expression"/>
    <property type="evidence" value="ECO:0007669"/>
    <property type="project" value="TreeGrafter"/>
</dbReference>
<dbReference type="FunFam" id="3.30.160.60:FF:000759">
    <property type="entry name" value="zinc finger protein 16"/>
    <property type="match status" value="3"/>
</dbReference>
<dbReference type="FunFam" id="3.30.160.60:FF:002716">
    <property type="entry name" value="Zinc finger protein 212"/>
    <property type="match status" value="1"/>
</dbReference>
<dbReference type="FunFam" id="3.30.160.60:FF:000358">
    <property type="entry name" value="zinc finger protein 24"/>
    <property type="match status" value="1"/>
</dbReference>
<dbReference type="FunFam" id="3.30.160.60:FF:002343">
    <property type="entry name" value="Zinc finger protein 33A"/>
    <property type="match status" value="1"/>
</dbReference>
<dbReference type="Gene3D" id="3.30.160.60">
    <property type="entry name" value="Classic Zinc Finger"/>
    <property type="match status" value="6"/>
</dbReference>
<dbReference type="InterPro" id="IPR050331">
    <property type="entry name" value="Zinc_finger"/>
</dbReference>
<dbReference type="InterPro" id="IPR036236">
    <property type="entry name" value="Znf_C2H2_sf"/>
</dbReference>
<dbReference type="InterPro" id="IPR013087">
    <property type="entry name" value="Znf_C2H2_type"/>
</dbReference>
<dbReference type="PANTHER" id="PTHR16515:SF52">
    <property type="entry name" value="GASTRULA ZINC FINGER PROTEIN XLCGF26.1"/>
    <property type="match status" value="1"/>
</dbReference>
<dbReference type="PANTHER" id="PTHR16515">
    <property type="entry name" value="PR DOMAIN ZINC FINGER PROTEIN"/>
    <property type="match status" value="1"/>
</dbReference>
<dbReference type="Pfam" id="PF00096">
    <property type="entry name" value="zf-C2H2"/>
    <property type="match status" value="6"/>
</dbReference>
<dbReference type="SMART" id="SM00355">
    <property type="entry name" value="ZnF_C2H2"/>
    <property type="match status" value="6"/>
</dbReference>
<dbReference type="SUPFAM" id="SSF57667">
    <property type="entry name" value="beta-beta-alpha zinc fingers"/>
    <property type="match status" value="3"/>
</dbReference>
<dbReference type="PROSITE" id="PS00028">
    <property type="entry name" value="ZINC_FINGER_C2H2_1"/>
    <property type="match status" value="6"/>
</dbReference>
<dbReference type="PROSITE" id="PS50157">
    <property type="entry name" value="ZINC_FINGER_C2H2_2"/>
    <property type="match status" value="6"/>
</dbReference>
<reference key="1">
    <citation type="journal article" date="1989" name="J. Mol. Biol.">
        <title>Second-order repeats in Xenopus laevis finger proteins.</title>
        <authorList>
            <person name="Nietfeld W."/>
            <person name="El-Baradi T."/>
            <person name="Mentzel H."/>
            <person name="Pieler T."/>
            <person name="Koester M."/>
            <person name="Poeting A."/>
            <person name="Knoechel W."/>
        </authorList>
    </citation>
    <scope>NUCLEOTIDE SEQUENCE</scope>
</reference>